<organism>
    <name type="scientific">Bacteroides fragilis (strain ATCC 25285 / DSM 2151 / CCUG 4856 / JCM 11019 / LMG 10263 / NCTC 9343 / Onslow / VPI 2553 / EN-2)</name>
    <dbReference type="NCBI Taxonomy" id="272559"/>
    <lineage>
        <taxon>Bacteria</taxon>
        <taxon>Pseudomonadati</taxon>
        <taxon>Bacteroidota</taxon>
        <taxon>Bacteroidia</taxon>
        <taxon>Bacteroidales</taxon>
        <taxon>Bacteroidaceae</taxon>
        <taxon>Bacteroides</taxon>
    </lineage>
</organism>
<sequence length="605" mass="68189">MKKYLHILPACFLFYAAAHAQQKDTVYVTDFGAVPYSYENCVTQIQAAIDECKRTGAKVLSLPEGRYDIWPEGAIRKEYYISNTSTEQECPSKVKTVGLMLHEIDDLTIEGNGATLMYHGKMTTIALEHCNGVRINNLHIDFERPAGSEIQYRKVTGGETEVTLHRDTRYEIVNGKIRLYGEGWRSNRNHCIEYDPDTESFTYSQGWNTLSASDAREIAPGIVRFNTPAEFMPKAGNTLTVRDIIRDQVGLFILESKNITLSRLQMHYMHGLGIVSQYTENITMDRVKCAPRPDSGRLLAASADMMHFSGCKGKVIIDSCYFAGAQDDPVNVHGTNLRALEKIDAQTLKLRFMHGQSYGFNAYFKGDTVAFVRAATMERFASATVRDVRRISDRIVEVRFDRDIPTSLELNHDCVENMTCTPEVEIRNCYFTRTSTRGTLVTTPRKVVIENNTYYKTGMSAILIEADAEGWYESGPVKDVLIKGNTFIDCAYNGGPGHAVIAIHPSNKIIDAERPVHQNIRIEDNTFRTFDYPVLYAKSTAGLLFRNNTIVRTETFPAVSGNPYVFYLNGCKKAVIEGTVFEGETPRQSIKTENMKRKDLKTTIK</sequence>
<accession>Q5L7M8</accession>
<accession>A4Q8G5</accession>
<reference key="1">
    <citation type="journal article" date="2007" name="Nat. Biotechnol.">
        <title>Bacterial glycosidases for the production of universal red blood cells.</title>
        <authorList>
            <person name="Liu Q.P."/>
            <person name="Sulzenbacher G."/>
            <person name="Yuan H."/>
            <person name="Bennett E.P."/>
            <person name="Pietz G."/>
            <person name="Saunders K."/>
            <person name="Spence J."/>
            <person name="Nudelman E."/>
            <person name="Levery S.B."/>
            <person name="White T."/>
            <person name="Neveu J.M."/>
            <person name="Lane W.S."/>
            <person name="Bourne Y."/>
            <person name="Olsson M.L."/>
            <person name="Henrissat B."/>
            <person name="Clausen H."/>
        </authorList>
    </citation>
    <scope>NUCLEOTIDE SEQUENCE [GENOMIC DNA]</scope>
</reference>
<reference key="2">
    <citation type="journal article" date="2005" name="Science">
        <title>Extensive DNA inversions in the B. fragilis genome control variable gene expression.</title>
        <authorList>
            <person name="Cerdeno-Tarraga A.-M."/>
            <person name="Patrick S."/>
            <person name="Crossman L.C."/>
            <person name="Blakely G."/>
            <person name="Abratt V."/>
            <person name="Lennard N."/>
            <person name="Poxton I."/>
            <person name="Duerden B."/>
            <person name="Harris B."/>
            <person name="Quail M.A."/>
            <person name="Barron A."/>
            <person name="Clark L."/>
            <person name="Corton C."/>
            <person name="Doggett J."/>
            <person name="Holden M.T.G."/>
            <person name="Larke N."/>
            <person name="Line A."/>
            <person name="Lord A."/>
            <person name="Norbertczak H."/>
            <person name="Ormond D."/>
            <person name="Price C."/>
            <person name="Rabbinowitsch E."/>
            <person name="Woodward J."/>
            <person name="Barrell B.G."/>
            <person name="Parkhill J."/>
        </authorList>
    </citation>
    <scope>NUCLEOTIDE SEQUENCE [LARGE SCALE GENOMIC DNA]</scope>
    <source>
        <strain>ATCC 25285 / DSM 2151 / CCUG 4856 / JCM 11019 / LMG 10263 / NCTC 9343 / Onslow / VPI 2553 / EN-2</strain>
    </source>
</reference>
<reference key="3">
    <citation type="journal article" date="2008" name="J. Biol. Chem.">
        <title>Identification of a GH110 subfamily of alpha1,3-galactosidases: novel enzymes for removal of the alpha3Gal xenotransplantation antigen.</title>
        <authorList>
            <person name="Liu Q.P."/>
            <person name="Yuan H."/>
            <person name="Bennett E.P."/>
            <person name="Levery S.B."/>
            <person name="Nudelman E."/>
            <person name="Spence J."/>
            <person name="Pietz G."/>
            <person name="Saunders K."/>
            <person name="White T."/>
            <person name="Olsson M.L."/>
            <person name="Henrissat B."/>
            <person name="Sulzenbacher G."/>
            <person name="Clausen H."/>
        </authorList>
    </citation>
    <scope>ENZYME ACTIVITY</scope>
</reference>
<feature type="signal peptide" evidence="1">
    <location>
        <begin position="1"/>
        <end position="20"/>
    </location>
</feature>
<feature type="chain" id="PRO_0000348471" description="Alpha-1,3-galactosidase A">
    <location>
        <begin position="21"/>
        <end position="605"/>
    </location>
</feature>
<feature type="repeat" description="PbH1 1">
    <location>
        <begin position="256"/>
        <end position="278"/>
    </location>
</feature>
<feature type="repeat" description="PbH1 2">
    <location>
        <begin position="312"/>
        <end position="334"/>
    </location>
</feature>
<feature type="repeat" description="PbH1 3">
    <location>
        <begin position="421"/>
        <end position="443"/>
    </location>
</feature>
<feature type="repeat" description="PbH1 4">
    <location>
        <begin position="444"/>
        <end position="466"/>
    </location>
</feature>
<feature type="repeat" description="PbH1 5">
    <location>
        <begin position="477"/>
        <end position="507"/>
    </location>
</feature>
<feature type="repeat" description="PbH1 6">
    <location>
        <begin position="517"/>
        <end position="547"/>
    </location>
</feature>
<protein>
    <recommendedName>
        <fullName>Alpha-1,3-galactosidase A</fullName>
        <ecNumber>3.2.1.n1</ecNumber>
    </recommendedName>
    <alternativeName>
        <fullName>BfGal110A</fullName>
    </alternativeName>
    <alternativeName>
        <fullName>Exo-alpha-galactosidase A</fullName>
        <ecNumber>3.2.1.22</ecNumber>
    </alternativeName>
</protein>
<keyword id="KW-0326">Glycosidase</keyword>
<keyword id="KW-0378">Hydrolase</keyword>
<keyword id="KW-0677">Repeat</keyword>
<keyword id="KW-0732">Signal</keyword>
<gene>
    <name type="primary">glaA</name>
    <name type="ordered locus">BF4251</name>
</gene>
<proteinExistence type="inferred from homology"/>
<name>GLAA_BACFN</name>
<evidence type="ECO:0000255" key="1"/>
<evidence type="ECO:0000269" key="2">
    <source>
    </source>
</evidence>
<evidence type="ECO:0000305" key="3"/>
<comment type="function">
    <text>Alpha-galactosidase that specifically removes branched alpha-1,3-linked galactose residues present in blood group B antigens. Has no activity toward linear alpha-1,3-linked galactose residues.</text>
</comment>
<comment type="catalytic activity">
    <reaction evidence="2">
        <text>Hydrolysis of terminal, non-reducing branched (1-&gt;3)-alpha-D-galactosidic residues, producing free D-galactose.</text>
        <dbReference type="EC" id="3.2.1.n1"/>
    </reaction>
</comment>
<comment type="catalytic activity">
    <reaction evidence="2">
        <text>Hydrolysis of terminal, non-reducing alpha-D-galactose residues in alpha-D-galactosides, including galactose oligosaccharides, galactomannans and galactolipids.</text>
        <dbReference type="EC" id="3.2.1.22"/>
    </reaction>
</comment>
<comment type="similarity">
    <text evidence="3">Belongs to the glycosyl hydrolase 110 family. A subfamily.</text>
</comment>
<dbReference type="EC" id="3.2.1.n1"/>
<dbReference type="EC" id="3.2.1.22"/>
<dbReference type="EMBL" id="AM109954">
    <property type="protein sequence ID" value="CAJ33350.1"/>
    <property type="molecule type" value="Genomic_DNA"/>
</dbReference>
<dbReference type="EMBL" id="CR626927">
    <property type="protein sequence ID" value="CAH09922.1"/>
    <property type="molecule type" value="Genomic_DNA"/>
</dbReference>
<dbReference type="RefSeq" id="WP_010993781.1">
    <property type="nucleotide sequence ID" value="NC_003228.3"/>
</dbReference>
<dbReference type="SMR" id="Q5L7M8"/>
<dbReference type="CAZy" id="GH110">
    <property type="family name" value="Glycoside Hydrolase Family 110"/>
</dbReference>
<dbReference type="PaxDb" id="272559-BF9343_4141"/>
<dbReference type="GeneID" id="60369717"/>
<dbReference type="KEGG" id="bfs:BF9343_4141"/>
<dbReference type="eggNOG" id="COG5434">
    <property type="taxonomic scope" value="Bacteria"/>
</dbReference>
<dbReference type="HOGENOM" id="CLU_017693_0_0_10"/>
<dbReference type="BioCyc" id="MetaCyc:MONOMER-21425"/>
<dbReference type="SABIO-RK" id="Q5L7M8"/>
<dbReference type="Proteomes" id="UP000006731">
    <property type="component" value="Chromosome"/>
</dbReference>
<dbReference type="GO" id="GO:0004557">
    <property type="term" value="F:alpha-galactosidase activity"/>
    <property type="evidence" value="ECO:0007669"/>
    <property type="project" value="UniProtKB-EC"/>
</dbReference>
<dbReference type="Gene3D" id="2.160.20.10">
    <property type="entry name" value="Single-stranded right-handed beta-helix, Pectin lyase-like"/>
    <property type="match status" value="3"/>
</dbReference>
<dbReference type="InterPro" id="IPR056441">
    <property type="entry name" value="Beta-barrel_GLAA-B_II"/>
</dbReference>
<dbReference type="InterPro" id="IPR039448">
    <property type="entry name" value="Beta_helix"/>
</dbReference>
<dbReference type="InterPro" id="IPR006626">
    <property type="entry name" value="PbH1"/>
</dbReference>
<dbReference type="InterPro" id="IPR012334">
    <property type="entry name" value="Pectin_lyas_fold"/>
</dbReference>
<dbReference type="InterPro" id="IPR011050">
    <property type="entry name" value="Pectin_lyase_fold/virulence"/>
</dbReference>
<dbReference type="Pfam" id="PF23763">
    <property type="entry name" value="Beta-barrel_GLAA-B_I"/>
    <property type="match status" value="1"/>
</dbReference>
<dbReference type="Pfam" id="PF23764">
    <property type="entry name" value="Beta-barrel_GLAA-B_II"/>
    <property type="match status" value="1"/>
</dbReference>
<dbReference type="Pfam" id="PF13229">
    <property type="entry name" value="Beta_helix"/>
    <property type="match status" value="1"/>
</dbReference>
<dbReference type="SMART" id="SM00710">
    <property type="entry name" value="PbH1"/>
    <property type="match status" value="6"/>
</dbReference>
<dbReference type="SUPFAM" id="SSF51126">
    <property type="entry name" value="Pectin lyase-like"/>
    <property type="match status" value="1"/>
</dbReference>